<protein>
    <recommendedName>
        <fullName>F-box/LRR-repeat protein At4g29420</fullName>
    </recommendedName>
</protein>
<reference key="1">
    <citation type="journal article" date="1999" name="Nature">
        <title>Sequence and analysis of chromosome 4 of the plant Arabidopsis thaliana.</title>
        <authorList>
            <person name="Mayer K.F.X."/>
            <person name="Schueller C."/>
            <person name="Wambutt R."/>
            <person name="Murphy G."/>
            <person name="Volckaert G."/>
            <person name="Pohl T."/>
            <person name="Duesterhoeft A."/>
            <person name="Stiekema W."/>
            <person name="Entian K.-D."/>
            <person name="Terryn N."/>
            <person name="Harris B."/>
            <person name="Ansorge W."/>
            <person name="Brandt P."/>
            <person name="Grivell L.A."/>
            <person name="Rieger M."/>
            <person name="Weichselgartner M."/>
            <person name="de Simone V."/>
            <person name="Obermaier B."/>
            <person name="Mache R."/>
            <person name="Mueller M."/>
            <person name="Kreis M."/>
            <person name="Delseny M."/>
            <person name="Puigdomenech P."/>
            <person name="Watson M."/>
            <person name="Schmidtheini T."/>
            <person name="Reichert B."/>
            <person name="Portetelle D."/>
            <person name="Perez-Alonso M."/>
            <person name="Boutry M."/>
            <person name="Bancroft I."/>
            <person name="Vos P."/>
            <person name="Hoheisel J."/>
            <person name="Zimmermann W."/>
            <person name="Wedler H."/>
            <person name="Ridley P."/>
            <person name="Langham S.-A."/>
            <person name="McCullagh B."/>
            <person name="Bilham L."/>
            <person name="Robben J."/>
            <person name="van der Schueren J."/>
            <person name="Grymonprez B."/>
            <person name="Chuang Y.-J."/>
            <person name="Vandenbussche F."/>
            <person name="Braeken M."/>
            <person name="Weltjens I."/>
            <person name="Voet M."/>
            <person name="Bastiaens I."/>
            <person name="Aert R."/>
            <person name="Defoor E."/>
            <person name="Weitzenegger T."/>
            <person name="Bothe G."/>
            <person name="Ramsperger U."/>
            <person name="Hilbert H."/>
            <person name="Braun M."/>
            <person name="Holzer E."/>
            <person name="Brandt A."/>
            <person name="Peters S."/>
            <person name="van Staveren M."/>
            <person name="Dirkse W."/>
            <person name="Mooijman P."/>
            <person name="Klein Lankhorst R."/>
            <person name="Rose M."/>
            <person name="Hauf J."/>
            <person name="Koetter P."/>
            <person name="Berneiser S."/>
            <person name="Hempel S."/>
            <person name="Feldpausch M."/>
            <person name="Lamberth S."/>
            <person name="Van den Daele H."/>
            <person name="De Keyser A."/>
            <person name="Buysshaert C."/>
            <person name="Gielen J."/>
            <person name="Villarroel R."/>
            <person name="De Clercq R."/>
            <person name="van Montagu M."/>
            <person name="Rogers J."/>
            <person name="Cronin A."/>
            <person name="Quail M.A."/>
            <person name="Bray-Allen S."/>
            <person name="Clark L."/>
            <person name="Doggett J."/>
            <person name="Hall S."/>
            <person name="Kay M."/>
            <person name="Lennard N."/>
            <person name="McLay K."/>
            <person name="Mayes R."/>
            <person name="Pettett A."/>
            <person name="Rajandream M.A."/>
            <person name="Lyne M."/>
            <person name="Benes V."/>
            <person name="Rechmann S."/>
            <person name="Borkova D."/>
            <person name="Bloecker H."/>
            <person name="Scharfe M."/>
            <person name="Grimm M."/>
            <person name="Loehnert T.-H."/>
            <person name="Dose S."/>
            <person name="de Haan M."/>
            <person name="Maarse A.C."/>
            <person name="Schaefer M."/>
            <person name="Mueller-Auer S."/>
            <person name="Gabel C."/>
            <person name="Fuchs M."/>
            <person name="Fartmann B."/>
            <person name="Granderath K."/>
            <person name="Dauner D."/>
            <person name="Herzl A."/>
            <person name="Neumann S."/>
            <person name="Argiriou A."/>
            <person name="Vitale D."/>
            <person name="Liguori R."/>
            <person name="Piravandi E."/>
            <person name="Massenet O."/>
            <person name="Quigley F."/>
            <person name="Clabauld G."/>
            <person name="Muendlein A."/>
            <person name="Felber R."/>
            <person name="Schnabl S."/>
            <person name="Hiller R."/>
            <person name="Schmidt W."/>
            <person name="Lecharny A."/>
            <person name="Aubourg S."/>
            <person name="Chefdor F."/>
            <person name="Cooke R."/>
            <person name="Berger C."/>
            <person name="Monfort A."/>
            <person name="Casacuberta E."/>
            <person name="Gibbons T."/>
            <person name="Weber N."/>
            <person name="Vandenbol M."/>
            <person name="Bargues M."/>
            <person name="Terol J."/>
            <person name="Torres A."/>
            <person name="Perez-Perez A."/>
            <person name="Purnelle B."/>
            <person name="Bent E."/>
            <person name="Johnson S."/>
            <person name="Tacon D."/>
            <person name="Jesse T."/>
            <person name="Heijnen L."/>
            <person name="Schwarz S."/>
            <person name="Scholler P."/>
            <person name="Heber S."/>
            <person name="Francs P."/>
            <person name="Bielke C."/>
            <person name="Frishman D."/>
            <person name="Haase D."/>
            <person name="Lemcke K."/>
            <person name="Mewes H.-W."/>
            <person name="Stocker S."/>
            <person name="Zaccaria P."/>
            <person name="Bevan M."/>
            <person name="Wilson R.K."/>
            <person name="de la Bastide M."/>
            <person name="Habermann K."/>
            <person name="Parnell L."/>
            <person name="Dedhia N."/>
            <person name="Gnoj L."/>
            <person name="Schutz K."/>
            <person name="Huang E."/>
            <person name="Spiegel L."/>
            <person name="Sekhon M."/>
            <person name="Murray J."/>
            <person name="Sheet P."/>
            <person name="Cordes M."/>
            <person name="Abu-Threideh J."/>
            <person name="Stoneking T."/>
            <person name="Kalicki J."/>
            <person name="Graves T."/>
            <person name="Harmon G."/>
            <person name="Edwards J."/>
            <person name="Latreille P."/>
            <person name="Courtney L."/>
            <person name="Cloud J."/>
            <person name="Abbott A."/>
            <person name="Scott K."/>
            <person name="Johnson D."/>
            <person name="Minx P."/>
            <person name="Bentley D."/>
            <person name="Fulton B."/>
            <person name="Miller N."/>
            <person name="Greco T."/>
            <person name="Kemp K."/>
            <person name="Kramer J."/>
            <person name="Fulton L."/>
            <person name="Mardis E."/>
            <person name="Dante M."/>
            <person name="Pepin K."/>
            <person name="Hillier L.W."/>
            <person name="Nelson J."/>
            <person name="Spieth J."/>
            <person name="Ryan E."/>
            <person name="Andrews S."/>
            <person name="Geisel C."/>
            <person name="Layman D."/>
            <person name="Du H."/>
            <person name="Ali J."/>
            <person name="Berghoff A."/>
            <person name="Jones K."/>
            <person name="Drone K."/>
            <person name="Cotton M."/>
            <person name="Joshu C."/>
            <person name="Antonoiu B."/>
            <person name="Zidanic M."/>
            <person name="Strong C."/>
            <person name="Sun H."/>
            <person name="Lamar B."/>
            <person name="Yordan C."/>
            <person name="Ma P."/>
            <person name="Zhong J."/>
            <person name="Preston R."/>
            <person name="Vil D."/>
            <person name="Shekher M."/>
            <person name="Matero A."/>
            <person name="Shah R."/>
            <person name="Swaby I.K."/>
            <person name="O'Shaughnessy A."/>
            <person name="Rodriguez M."/>
            <person name="Hoffman J."/>
            <person name="Till S."/>
            <person name="Granat S."/>
            <person name="Shohdy N."/>
            <person name="Hasegawa A."/>
            <person name="Hameed A."/>
            <person name="Lodhi M."/>
            <person name="Johnson A."/>
            <person name="Chen E."/>
            <person name="Marra M.A."/>
            <person name="Martienssen R."/>
            <person name="McCombie W.R."/>
        </authorList>
    </citation>
    <scope>NUCLEOTIDE SEQUENCE [LARGE SCALE GENOMIC DNA]</scope>
    <source>
        <strain>cv. Columbia</strain>
    </source>
</reference>
<reference key="2">
    <citation type="journal article" date="2017" name="Plant J.">
        <title>Araport11: a complete reannotation of the Arabidopsis thaliana reference genome.</title>
        <authorList>
            <person name="Cheng C.Y."/>
            <person name="Krishnakumar V."/>
            <person name="Chan A.P."/>
            <person name="Thibaud-Nissen F."/>
            <person name="Schobel S."/>
            <person name="Town C.D."/>
        </authorList>
    </citation>
    <scope>GENOME REANNOTATION</scope>
    <source>
        <strain>cv. Columbia</strain>
    </source>
</reference>
<reference key="3">
    <citation type="journal article" date="2002" name="Science">
        <title>Functional annotation of a full-length Arabidopsis cDNA collection.</title>
        <authorList>
            <person name="Seki M."/>
            <person name="Narusaka M."/>
            <person name="Kamiya A."/>
            <person name="Ishida J."/>
            <person name="Satou M."/>
            <person name="Sakurai T."/>
            <person name="Nakajima M."/>
            <person name="Enju A."/>
            <person name="Akiyama K."/>
            <person name="Oono Y."/>
            <person name="Muramatsu M."/>
            <person name="Hayashizaki Y."/>
            <person name="Kawai J."/>
            <person name="Carninci P."/>
            <person name="Itoh M."/>
            <person name="Ishii Y."/>
            <person name="Arakawa T."/>
            <person name="Shibata K."/>
            <person name="Shinagawa A."/>
            <person name="Shinozaki K."/>
        </authorList>
    </citation>
    <scope>NUCLEOTIDE SEQUENCE [LARGE SCALE MRNA]</scope>
    <source>
        <strain>cv. Columbia</strain>
    </source>
</reference>
<reference key="4">
    <citation type="submission" date="2006-07" db="EMBL/GenBank/DDBJ databases">
        <title>Arabidopsis ORF clones.</title>
        <authorList>
            <person name="Kim C.J."/>
            <person name="Chen H."/>
            <person name="Quinitio C."/>
            <person name="Shinn P."/>
            <person name="Ecker J.R."/>
        </authorList>
    </citation>
    <scope>NUCLEOTIDE SEQUENCE [LARGE SCALE MRNA]</scope>
    <source>
        <strain>cv. Columbia</strain>
    </source>
</reference>
<keyword id="KW-0433">Leucine-rich repeat</keyword>
<keyword id="KW-1185">Reference proteome</keyword>
<keyword id="KW-0677">Repeat</keyword>
<evidence type="ECO:0000305" key="1"/>
<organism>
    <name type="scientific">Arabidopsis thaliana</name>
    <name type="common">Mouse-ear cress</name>
    <dbReference type="NCBI Taxonomy" id="3702"/>
    <lineage>
        <taxon>Eukaryota</taxon>
        <taxon>Viridiplantae</taxon>
        <taxon>Streptophyta</taxon>
        <taxon>Embryophyta</taxon>
        <taxon>Tracheophyta</taxon>
        <taxon>Spermatophyta</taxon>
        <taxon>Magnoliopsida</taxon>
        <taxon>eudicotyledons</taxon>
        <taxon>Gunneridae</taxon>
        <taxon>Pentapetalae</taxon>
        <taxon>rosids</taxon>
        <taxon>malvids</taxon>
        <taxon>Brassicales</taxon>
        <taxon>Brassicaceae</taxon>
        <taxon>Camelineae</taxon>
        <taxon>Arabidopsis</taxon>
    </lineage>
</organism>
<proteinExistence type="evidence at transcript level"/>
<gene>
    <name type="ordered locus">At4g29420</name>
    <name type="ORF">F17A13.240</name>
</gene>
<name>FBL77_ARATH</name>
<sequence length="446" mass="50879">MDELPPELWIKILSRINDSESLARCRVASKTLNSLSREVRAVNLICTWSRYLKSRSIVVVTPFKTIFRSLIENSSKIRSISVGVDKALKGMSFDDFNEEDSKDLYLTDVEFVKEWLPRVREDLENLSISDFWIQSCWRKSDILALISSNCSKLVKLEVKNAWLSVVGLTEMPNLRYLTLEFIRLDDENLEKVNDCFPFLQELNLIGVGGLKEPRIHFLHLKSCHWTVSNAPLSLAIVAPNLLELKLKCNKPKSLLVETPKLVQCHLSVEDAEGVSFGEFQDLKTLELVSPDMYRLISNISFGNKIKKLAVDSVKSIEQSERLELGLATILKAFPGITSLSLSPRTWSDIETHFQSQGGLGDMKGTDSLKQITARVQMSDHTNVHQTVSFIRSIVNKYRGLTDMRLMIHQDKDPRVRSNLISTCMMSNPRVRWKWGMWAEGGEDMWV</sequence>
<accession>Q9M0E1</accession>
<accession>Q8GYI1</accession>
<feature type="chain" id="PRO_0000281974" description="F-box/LRR-repeat protein At4g29420">
    <location>
        <begin position="1"/>
        <end position="446"/>
    </location>
</feature>
<feature type="domain" description="F-box">
    <location>
        <begin position="1"/>
        <end position="51"/>
    </location>
</feature>
<feature type="repeat" description="LRR 1">
    <location>
        <begin position="59"/>
        <end position="84"/>
    </location>
</feature>
<feature type="repeat" description="LRR 2">
    <location>
        <begin position="103"/>
        <end position="130"/>
    </location>
</feature>
<feature type="repeat" description="LRR 3">
    <location>
        <begin position="135"/>
        <end position="160"/>
    </location>
</feature>
<feature type="repeat" description="LRR 4">
    <location>
        <begin position="181"/>
        <end position="206"/>
    </location>
</feature>
<feature type="repeat" description="LRR 5">
    <location>
        <begin position="223"/>
        <end position="248"/>
    </location>
</feature>
<feature type="repeat" description="LRR 6">
    <location>
        <begin position="265"/>
        <end position="289"/>
    </location>
</feature>
<feature type="repeat" description="LRR 7">
    <location>
        <begin position="318"/>
        <end position="343"/>
    </location>
</feature>
<feature type="repeat" description="LRR 8">
    <location>
        <begin position="382"/>
        <end position="407"/>
    </location>
</feature>
<feature type="sequence conflict" description="In Ref. 3; BAC42265." evidence="1" ref="3">
    <original>E</original>
    <variation>G</variation>
    <location>
        <position position="317"/>
    </location>
</feature>
<dbReference type="EMBL" id="AL161575">
    <property type="protein sequence ID" value="CAB79700.1"/>
    <property type="molecule type" value="Genomic_DNA"/>
</dbReference>
<dbReference type="EMBL" id="CP002687">
    <property type="protein sequence ID" value="AEE85629.1"/>
    <property type="molecule type" value="Genomic_DNA"/>
</dbReference>
<dbReference type="EMBL" id="AK117609">
    <property type="protein sequence ID" value="BAC42265.1"/>
    <property type="molecule type" value="mRNA"/>
</dbReference>
<dbReference type="EMBL" id="BT026133">
    <property type="protein sequence ID" value="ABG48489.1"/>
    <property type="molecule type" value="mRNA"/>
</dbReference>
<dbReference type="PIR" id="C85343">
    <property type="entry name" value="C85343"/>
</dbReference>
<dbReference type="RefSeq" id="NP_194671.1">
    <property type="nucleotide sequence ID" value="NM_119087.3"/>
</dbReference>
<dbReference type="FunCoup" id="Q9M0E1">
    <property type="interactions" value="927"/>
</dbReference>
<dbReference type="iPTMnet" id="Q9M0E1"/>
<dbReference type="PaxDb" id="3702-AT4G29420.1"/>
<dbReference type="EnsemblPlants" id="AT4G29420.1">
    <property type="protein sequence ID" value="AT4G29420.1"/>
    <property type="gene ID" value="AT4G29420"/>
</dbReference>
<dbReference type="GeneID" id="829063"/>
<dbReference type="Gramene" id="AT4G29420.1">
    <property type="protein sequence ID" value="AT4G29420.1"/>
    <property type="gene ID" value="AT4G29420"/>
</dbReference>
<dbReference type="KEGG" id="ath:AT4G29420"/>
<dbReference type="Araport" id="AT4G29420"/>
<dbReference type="TAIR" id="AT4G29420"/>
<dbReference type="eggNOG" id="ENOG502QQ0V">
    <property type="taxonomic scope" value="Eukaryota"/>
</dbReference>
<dbReference type="HOGENOM" id="CLU_615948_0_0_1"/>
<dbReference type="InParanoid" id="Q9M0E1"/>
<dbReference type="OMA" id="CQWTVSN"/>
<dbReference type="OrthoDB" id="2242903at2759"/>
<dbReference type="PhylomeDB" id="Q9M0E1"/>
<dbReference type="PRO" id="PR:Q9M0E1"/>
<dbReference type="Proteomes" id="UP000006548">
    <property type="component" value="Chromosome 4"/>
</dbReference>
<dbReference type="ExpressionAtlas" id="Q9M0E1">
    <property type="expression patterns" value="baseline and differential"/>
</dbReference>
<dbReference type="Gene3D" id="3.80.10.10">
    <property type="entry name" value="Ribonuclease Inhibitor"/>
    <property type="match status" value="1"/>
</dbReference>
<dbReference type="InterPro" id="IPR044809">
    <property type="entry name" value="AUF1-like"/>
</dbReference>
<dbReference type="InterPro" id="IPR036047">
    <property type="entry name" value="F-box-like_dom_sf"/>
</dbReference>
<dbReference type="InterPro" id="IPR001810">
    <property type="entry name" value="F-box_dom"/>
</dbReference>
<dbReference type="InterPro" id="IPR032675">
    <property type="entry name" value="LRR_dom_sf"/>
</dbReference>
<dbReference type="PANTHER" id="PTHR31215">
    <property type="entry name" value="OS05G0510400 PROTEIN-RELATED"/>
    <property type="match status" value="1"/>
</dbReference>
<dbReference type="Pfam" id="PF00646">
    <property type="entry name" value="F-box"/>
    <property type="match status" value="1"/>
</dbReference>
<dbReference type="SUPFAM" id="SSF81383">
    <property type="entry name" value="F-box domain"/>
    <property type="match status" value="1"/>
</dbReference>
<dbReference type="SUPFAM" id="SSF52047">
    <property type="entry name" value="RNI-like"/>
    <property type="match status" value="1"/>
</dbReference>